<name>NLRC4_BOVIN</name>
<comment type="function">
    <text evidence="2">Key component of inflammasomes that indirectly senses specific proteins from pathogenic bacteria and fungi and responds by assembling an inflammasome complex that promotes caspase-1 activation, cytokine production and macrophage pyroptosis. The NLRC4 inflammasome is activated as part of the innate immune response to a range of intracellular bacteria.</text>
</comment>
<comment type="subunit">
    <text evidence="2 3">Homooligomer; homooligomerizes following activation of Naip proteins by pathogenic proteins such as S.typhimurium (Salmonella) flagellin or PrgJ. Component of the NLRC4 inflammasome, at least composed of NLRC4, caspase-1 (CASP1) and some NAIP family member (By similarity). Interacts with EIF2AK2/PKR (By similarity).</text>
</comment>
<comment type="subcellular location">
    <subcellularLocation>
        <location evidence="2">Cytoplasm</location>
        <location evidence="2">Cytosol</location>
    </subcellularLocation>
</comment>
<comment type="domain">
    <text evidence="2">In an autoinhibited form the C-terminal leucine-rich repeat (LRR) domain is positioned to sterically occlude one side of the NBD domain and consequently sequester NLRC4 in a monomeric state. An ADP-mediated interaction between the NBD and the WHD also contributes to the autoinhibition.</text>
</comment>
<comment type="PTM">
    <text evidence="2">Phosphorylated at Ser-533 following infection of macrophages with S.typhimurium (Salmonella). Phosphorylation is essential for NLRC4 inflammasome function to promote caspase-1 activation and pyroptosis. PRKCD phosphorylates Ser-533 in vitro.</text>
</comment>
<feature type="chain" id="PRO_0000419974" description="NLR family CARD domain-containing protein 4">
    <location>
        <begin position="1"/>
        <end position="1017"/>
    </location>
</feature>
<feature type="domain" description="CARD" evidence="4">
    <location>
        <begin position="1"/>
        <end position="88"/>
    </location>
</feature>
<feature type="domain" description="NACHT" evidence="5">
    <location>
        <begin position="163"/>
        <end position="476"/>
    </location>
</feature>
<feature type="repeat" description="LRR 1">
    <location>
        <begin position="578"/>
        <end position="598"/>
    </location>
</feature>
<feature type="repeat" description="LRR 2">
    <location>
        <begin position="649"/>
        <end position="672"/>
    </location>
</feature>
<feature type="repeat" description="LRR 3">
    <location>
        <begin position="728"/>
        <end position="751"/>
    </location>
</feature>
<feature type="repeat" description="LRR 4">
    <location>
        <begin position="755"/>
        <end position="778"/>
    </location>
</feature>
<feature type="repeat" description="LRR 5">
    <location>
        <begin position="780"/>
        <end position="805"/>
    </location>
</feature>
<feature type="repeat" description="LRR 6">
    <location>
        <begin position="817"/>
        <end position="840"/>
    </location>
</feature>
<feature type="repeat" description="LRR 7">
    <location>
        <begin position="841"/>
        <end position="863"/>
    </location>
</feature>
<feature type="repeat" description="LRR 8">
    <location>
        <begin position="871"/>
        <end position="895"/>
    </location>
</feature>
<feature type="repeat" description="LRR 9">
    <location>
        <begin position="904"/>
        <end position="926"/>
    </location>
</feature>
<feature type="repeat" description="LRR 10">
    <location>
        <begin position="929"/>
        <end position="956"/>
    </location>
</feature>
<feature type="repeat" description="LRR 11">
    <location>
        <begin position="958"/>
        <end position="978"/>
    </location>
</feature>
<feature type="repeat" description="LRR 12">
    <location>
        <begin position="992"/>
        <end position="1014"/>
    </location>
</feature>
<feature type="region of interest" description="Nucleotide-binding domain (NBD)" evidence="1">
    <location>
        <begin position="95"/>
        <end position="298"/>
    </location>
</feature>
<feature type="region of interest" description="Winged-helix domain (WHD)" evidence="1">
    <location>
        <begin position="356"/>
        <end position="463"/>
    </location>
</feature>
<feature type="binding site" evidence="5">
    <location>
        <begin position="169"/>
        <end position="176"/>
    </location>
    <ligand>
        <name>ATP</name>
        <dbReference type="ChEBI" id="CHEBI:30616"/>
    </ligand>
</feature>
<feature type="modified residue" description="Phosphoserine" evidence="2">
    <location>
        <position position="533"/>
    </location>
</feature>
<organism>
    <name type="scientific">Bos taurus</name>
    <name type="common">Bovine</name>
    <dbReference type="NCBI Taxonomy" id="9913"/>
    <lineage>
        <taxon>Eukaryota</taxon>
        <taxon>Metazoa</taxon>
        <taxon>Chordata</taxon>
        <taxon>Craniata</taxon>
        <taxon>Vertebrata</taxon>
        <taxon>Euteleostomi</taxon>
        <taxon>Mammalia</taxon>
        <taxon>Eutheria</taxon>
        <taxon>Laurasiatheria</taxon>
        <taxon>Artiodactyla</taxon>
        <taxon>Ruminantia</taxon>
        <taxon>Pecora</taxon>
        <taxon>Bovidae</taxon>
        <taxon>Bovinae</taxon>
        <taxon>Bos</taxon>
    </lineage>
</organism>
<keyword id="KW-0053">Apoptosis</keyword>
<keyword id="KW-0067">ATP-binding</keyword>
<keyword id="KW-0963">Cytoplasm</keyword>
<keyword id="KW-0391">Immunity</keyword>
<keyword id="KW-0395">Inflammatory response</keyword>
<keyword id="KW-0399">Innate immunity</keyword>
<keyword id="KW-0433">Leucine-rich repeat</keyword>
<keyword id="KW-0547">Nucleotide-binding</keyword>
<keyword id="KW-0597">Phosphoprotein</keyword>
<keyword id="KW-1185">Reference proteome</keyword>
<keyword id="KW-0677">Repeat</keyword>
<evidence type="ECO:0000250" key="1"/>
<evidence type="ECO:0000250" key="2">
    <source>
        <dbReference type="UniProtKB" id="Q3UP24"/>
    </source>
</evidence>
<evidence type="ECO:0000250" key="3">
    <source>
        <dbReference type="UniProtKB" id="Q9NPP4"/>
    </source>
</evidence>
<evidence type="ECO:0000255" key="4">
    <source>
        <dbReference type="PROSITE-ProRule" id="PRU00046"/>
    </source>
</evidence>
<evidence type="ECO:0000255" key="5">
    <source>
        <dbReference type="PROSITE-ProRule" id="PRU00136"/>
    </source>
</evidence>
<reference key="1">
    <citation type="journal article" date="2009" name="Genome Biol.">
        <title>A whole-genome assembly of the domestic cow, Bos taurus.</title>
        <authorList>
            <person name="Zimin A.V."/>
            <person name="Delcher A.L."/>
            <person name="Florea L."/>
            <person name="Kelley D.R."/>
            <person name="Schatz M.C."/>
            <person name="Puiu D."/>
            <person name="Hanrahan F."/>
            <person name="Pertea G."/>
            <person name="Van Tassell C.P."/>
            <person name="Sonstegard T.S."/>
            <person name="Marcais G."/>
            <person name="Roberts M."/>
            <person name="Subramanian P."/>
            <person name="Yorke J.A."/>
            <person name="Salzberg S.L."/>
        </authorList>
    </citation>
    <scope>NUCLEOTIDE SEQUENCE [LARGE SCALE GENOMIC DNA]</scope>
    <source>
        <strain>Hereford</strain>
    </source>
</reference>
<dbReference type="EMBL" id="DAAA02030442">
    <property type="status" value="NOT_ANNOTATED_CDS"/>
    <property type="molecule type" value="Genomic_DNA"/>
</dbReference>
<dbReference type="RefSeq" id="NP_001179252.2">
    <property type="nucleotide sequence ID" value="NM_001192323.2"/>
</dbReference>
<dbReference type="RefSeq" id="XP_005212578.1">
    <property type="nucleotide sequence ID" value="XM_005212521.3"/>
</dbReference>
<dbReference type="SMR" id="F1MHT9"/>
<dbReference type="FunCoup" id="F1MHT9">
    <property type="interactions" value="238"/>
</dbReference>
<dbReference type="STRING" id="9913.ENSBTAP00000010814"/>
<dbReference type="PaxDb" id="9913-ENSBTAP00000010814"/>
<dbReference type="GeneID" id="512480"/>
<dbReference type="KEGG" id="bta:512480"/>
<dbReference type="CTD" id="58484"/>
<dbReference type="eggNOG" id="ENOG502QWRJ">
    <property type="taxonomic scope" value="Eukaryota"/>
</dbReference>
<dbReference type="InParanoid" id="F1MHT9"/>
<dbReference type="OrthoDB" id="120976at2759"/>
<dbReference type="Proteomes" id="UP000009136">
    <property type="component" value="Unplaced"/>
</dbReference>
<dbReference type="GO" id="GO:0005829">
    <property type="term" value="C:cytosol"/>
    <property type="evidence" value="ECO:0000250"/>
    <property type="project" value="UniProtKB"/>
</dbReference>
<dbReference type="GO" id="GO:0072557">
    <property type="term" value="C:IPAF inflammasome complex"/>
    <property type="evidence" value="ECO:0000250"/>
    <property type="project" value="UniProtKB"/>
</dbReference>
<dbReference type="GO" id="GO:0005524">
    <property type="term" value="F:ATP binding"/>
    <property type="evidence" value="ECO:0007669"/>
    <property type="project" value="UniProtKB-KW"/>
</dbReference>
<dbReference type="GO" id="GO:0002218">
    <property type="term" value="P:activation of innate immune response"/>
    <property type="evidence" value="ECO:0000250"/>
    <property type="project" value="UniProtKB"/>
</dbReference>
<dbReference type="GO" id="GO:0006915">
    <property type="term" value="P:apoptotic process"/>
    <property type="evidence" value="ECO:0007669"/>
    <property type="project" value="UniProtKB-KW"/>
</dbReference>
<dbReference type="GO" id="GO:0042742">
    <property type="term" value="P:defense response to bacterium"/>
    <property type="evidence" value="ECO:0000250"/>
    <property type="project" value="UniProtKB"/>
</dbReference>
<dbReference type="GO" id="GO:0016045">
    <property type="term" value="P:detection of bacterium"/>
    <property type="evidence" value="ECO:0000250"/>
    <property type="project" value="UniProtKB"/>
</dbReference>
<dbReference type="GO" id="GO:0006954">
    <property type="term" value="P:inflammatory response"/>
    <property type="evidence" value="ECO:0000250"/>
    <property type="project" value="UniProtKB"/>
</dbReference>
<dbReference type="GO" id="GO:0045087">
    <property type="term" value="P:innate immune response"/>
    <property type="evidence" value="ECO:0007669"/>
    <property type="project" value="UniProtKB-KW"/>
</dbReference>
<dbReference type="GO" id="GO:0032731">
    <property type="term" value="P:positive regulation of interleukin-1 beta production"/>
    <property type="evidence" value="ECO:0000250"/>
    <property type="project" value="UniProtKB"/>
</dbReference>
<dbReference type="GO" id="GO:0051260">
    <property type="term" value="P:protein homooligomerization"/>
    <property type="evidence" value="ECO:0000250"/>
    <property type="project" value="UniProtKB"/>
</dbReference>
<dbReference type="GO" id="GO:0070269">
    <property type="term" value="P:pyroptotic inflammatory response"/>
    <property type="evidence" value="ECO:0000250"/>
    <property type="project" value="UniProtKB"/>
</dbReference>
<dbReference type="GO" id="GO:0042981">
    <property type="term" value="P:regulation of apoptotic process"/>
    <property type="evidence" value="ECO:0007669"/>
    <property type="project" value="InterPro"/>
</dbReference>
<dbReference type="CDD" id="cd01671">
    <property type="entry name" value="CARD"/>
    <property type="match status" value="1"/>
</dbReference>
<dbReference type="FunFam" id="1.10.533.10:FF:000068">
    <property type="entry name" value="NLR family CARD domain containing 4"/>
    <property type="match status" value="1"/>
</dbReference>
<dbReference type="FunFam" id="3.80.10.10:FF:000409">
    <property type="entry name" value="NLR family CARD domain containing 4"/>
    <property type="match status" value="1"/>
</dbReference>
<dbReference type="FunFam" id="1.10.1900.50:FF:000001">
    <property type="entry name" value="NLR family CARD domain-containing protein 4"/>
    <property type="match status" value="1"/>
</dbReference>
<dbReference type="FunFam" id="3.40.50.300:FF:001292">
    <property type="entry name" value="NLR family CARD domain-containing protein 4"/>
    <property type="match status" value="1"/>
</dbReference>
<dbReference type="Gene3D" id="1.10.1900.50">
    <property type="match status" value="1"/>
</dbReference>
<dbReference type="Gene3D" id="1.10.533.10">
    <property type="entry name" value="Death Domain, Fas"/>
    <property type="match status" value="1"/>
</dbReference>
<dbReference type="Gene3D" id="3.40.50.300">
    <property type="entry name" value="P-loop containing nucleotide triphosphate hydrolases"/>
    <property type="match status" value="1"/>
</dbReference>
<dbReference type="Gene3D" id="3.80.10.10">
    <property type="entry name" value="Ribonuclease Inhibitor"/>
    <property type="match status" value="1"/>
</dbReference>
<dbReference type="InterPro" id="IPR001315">
    <property type="entry name" value="CARD"/>
</dbReference>
<dbReference type="InterPro" id="IPR011029">
    <property type="entry name" value="DEATH-like_dom_sf"/>
</dbReference>
<dbReference type="InterPro" id="IPR032675">
    <property type="entry name" value="LRR_dom_sf"/>
</dbReference>
<dbReference type="InterPro" id="IPR007111">
    <property type="entry name" value="NACHT_NTPase"/>
</dbReference>
<dbReference type="InterPro" id="IPR042220">
    <property type="entry name" value="NLRC4"/>
</dbReference>
<dbReference type="InterPro" id="IPR053882">
    <property type="entry name" value="Nlrc4-like_WHD"/>
</dbReference>
<dbReference type="InterPro" id="IPR040535">
    <property type="entry name" value="NLRC4_HD"/>
</dbReference>
<dbReference type="InterPro" id="IPR027417">
    <property type="entry name" value="P-loop_NTPase"/>
</dbReference>
<dbReference type="PANTHER" id="PTHR47688">
    <property type="entry name" value="NLR FAMILY CARD DOMAIN-CONTAINING PROTEIN 4"/>
    <property type="match status" value="1"/>
</dbReference>
<dbReference type="PANTHER" id="PTHR47688:SF1">
    <property type="entry name" value="NLR FAMILY CARD DOMAIN-CONTAINING PROTEIN 4"/>
    <property type="match status" value="1"/>
</dbReference>
<dbReference type="Pfam" id="PF00619">
    <property type="entry name" value="CARD"/>
    <property type="match status" value="1"/>
</dbReference>
<dbReference type="Pfam" id="PF05729">
    <property type="entry name" value="NACHT"/>
    <property type="match status" value="1"/>
</dbReference>
<dbReference type="Pfam" id="PF22524">
    <property type="entry name" value="Nlrc4-like_WHD"/>
    <property type="match status" value="1"/>
</dbReference>
<dbReference type="Pfam" id="PF17889">
    <property type="entry name" value="NLRC4_HD"/>
    <property type="match status" value="1"/>
</dbReference>
<dbReference type="SUPFAM" id="SSF47986">
    <property type="entry name" value="DEATH domain"/>
    <property type="match status" value="1"/>
</dbReference>
<dbReference type="SUPFAM" id="SSF52540">
    <property type="entry name" value="P-loop containing nucleoside triphosphate hydrolases"/>
    <property type="match status" value="1"/>
</dbReference>
<dbReference type="SUPFAM" id="SSF52047">
    <property type="entry name" value="RNI-like"/>
    <property type="match status" value="1"/>
</dbReference>
<dbReference type="PROSITE" id="PS50209">
    <property type="entry name" value="CARD"/>
    <property type="match status" value="1"/>
</dbReference>
<dbReference type="PROSITE" id="PS50837">
    <property type="entry name" value="NACHT"/>
    <property type="match status" value="1"/>
</dbReference>
<gene>
    <name type="primary">NLRC4</name>
    <name type="synonym">IPAF</name>
</gene>
<protein>
    <recommendedName>
        <fullName>NLR family CARD domain-containing protein 4</fullName>
    </recommendedName>
    <alternativeName>
        <fullName>Ice protease-activating factor</fullName>
        <shortName>Ipaf</shortName>
    </alternativeName>
</protein>
<proteinExistence type="inferred from homology"/>
<sequence length="1017" mass="115578">MNFIKENSQVLIQRMGMTVIKQILDELFVWNVMNYEEVNVICGEKFEQDAARGVIHMILKKGSEACNLFLKSLEKWNYPLFQELHGLSLFHQMSEEDLDDLAQELKYFYQSPSFLNFYPLGEDIDIMFNLKSTFTEPVLWKKDQHHHRLEQLTLSGLLDTLQSPCIIEGESGKGKSTLLQRIAMLWASGECQALTKFKLVFFLRLSRAQGGLFETLSDQLLDIPDVISKQTFMARLLKLRQRVLFLLDGYNEFKAQNCPEIEALIKENHRFKNMVIVTTTTESLRHIRQFGALIAEVGDMTESSAQALIQEVLRKEFAEDLLLQIQKSRCLRNLMKTPLFVVITCAIQMGKSEFHSHTQTTLFCTFYDLLINKNRHKRKGLAPSEVTQSLDHCGDLALEGVFSRRFDFEPDDLSNVNEDVLLTTGLLCKYTAQRFKPKYKFFHQSFQEYTAGRRLSSLLTSGEPAEVTKGNGHLQKMVSISDITSKYSNLLLYTCGSSAEATRTVLKHLSSVYQHGSLLGLSVTKRPLWRQESMQNMKSTTVQEILKAININSFTECGINLFHESISTSSLSKEFEDFFRGKSLYINSENIPDYLFDFFEDLPNCASALDFVKLDFYGGAVRDISGNQDQEFSGTYIPSRAVSLFFNWKQEFKTLDVTLRDFCKLSKKDIKYLEKIFSSATSLRLHIKRCVGMAGSLSSVLSTCKNIHSLIVEASPLTLEDEQHITSVTNLQTLGVHDLQIQRLPGGLTDNLGNLKNLMKLILDNIQMNEEDALKLAEGLTNLKKMCLLRLTHLSDIGEGMDYIVKSLSAEPCDLKEIQLVSCCLSGNAVKTLAQNLHNLARLSILDLSENHLEKDGKEALQQLIDRLHILEQLTVLMLPWCGDVRVSLARLLEQLERVPQLVKLGLKNWRLTDAEIRILGVFFEKNPLENFQQLDLAGNCVSSDGWLAFMSGFENLKELVFFDFSTKGLLPDASLVRKLSHVLSKLTFLQEVQLVGWQLDDDDVSVLKGAFKLVIA</sequence>
<accession>F1MHT9</accession>